<evidence type="ECO:0000255" key="1">
    <source>
        <dbReference type="HAMAP-Rule" id="MF_00175"/>
    </source>
</evidence>
<evidence type="ECO:0000255" key="2">
    <source>
        <dbReference type="PROSITE-ProRule" id="PRU01250"/>
    </source>
</evidence>
<comment type="function">
    <text evidence="1">ATP-dependent specificity component of the Clp protease. It directs the protease to specific substrates. Can perform chaperone functions in the absence of ClpP.</text>
</comment>
<comment type="subunit">
    <text evidence="1">Component of the ClpX-ClpP complex. Forms a hexameric ring that, in the presence of ATP, binds to fourteen ClpP subunits assembled into a disk-like structure with a central cavity, resembling the structure of eukaryotic proteasomes.</text>
</comment>
<comment type="similarity">
    <text evidence="1">Belongs to the ClpX chaperone family.</text>
</comment>
<name>CLPX_TOLAT</name>
<feature type="chain" id="PRO_1000203745" description="ATP-dependent Clp protease ATP-binding subunit ClpX">
    <location>
        <begin position="1"/>
        <end position="426"/>
    </location>
</feature>
<feature type="domain" description="ClpX-type ZB" evidence="2">
    <location>
        <begin position="4"/>
        <end position="57"/>
    </location>
</feature>
<feature type="binding site" evidence="2">
    <location>
        <position position="16"/>
    </location>
    <ligand>
        <name>Zn(2+)</name>
        <dbReference type="ChEBI" id="CHEBI:29105"/>
    </ligand>
</feature>
<feature type="binding site" evidence="2">
    <location>
        <position position="19"/>
    </location>
    <ligand>
        <name>Zn(2+)</name>
        <dbReference type="ChEBI" id="CHEBI:29105"/>
    </ligand>
</feature>
<feature type="binding site" evidence="2">
    <location>
        <position position="38"/>
    </location>
    <ligand>
        <name>Zn(2+)</name>
        <dbReference type="ChEBI" id="CHEBI:29105"/>
    </ligand>
</feature>
<feature type="binding site" evidence="2">
    <location>
        <position position="41"/>
    </location>
    <ligand>
        <name>Zn(2+)</name>
        <dbReference type="ChEBI" id="CHEBI:29105"/>
    </ligand>
</feature>
<feature type="binding site" evidence="1">
    <location>
        <begin position="122"/>
        <end position="129"/>
    </location>
    <ligand>
        <name>ATP</name>
        <dbReference type="ChEBI" id="CHEBI:30616"/>
    </ligand>
</feature>
<accession>C4LDB4</accession>
<protein>
    <recommendedName>
        <fullName evidence="1">ATP-dependent Clp protease ATP-binding subunit ClpX</fullName>
    </recommendedName>
</protein>
<keyword id="KW-0067">ATP-binding</keyword>
<keyword id="KW-0143">Chaperone</keyword>
<keyword id="KW-0479">Metal-binding</keyword>
<keyword id="KW-0547">Nucleotide-binding</keyword>
<keyword id="KW-1185">Reference proteome</keyword>
<keyword id="KW-0862">Zinc</keyword>
<organism>
    <name type="scientific">Tolumonas auensis (strain DSM 9187 / NBRC 110442 / TA 4)</name>
    <dbReference type="NCBI Taxonomy" id="595494"/>
    <lineage>
        <taxon>Bacteria</taxon>
        <taxon>Pseudomonadati</taxon>
        <taxon>Pseudomonadota</taxon>
        <taxon>Gammaproteobacteria</taxon>
        <taxon>Aeromonadales</taxon>
        <taxon>Aeromonadaceae</taxon>
        <taxon>Tolumonas</taxon>
    </lineage>
</organism>
<reference key="1">
    <citation type="submission" date="2009-05" db="EMBL/GenBank/DDBJ databases">
        <title>Complete sequence of Tolumonas auensis DSM 9187.</title>
        <authorList>
            <consortium name="US DOE Joint Genome Institute"/>
            <person name="Lucas S."/>
            <person name="Copeland A."/>
            <person name="Lapidus A."/>
            <person name="Glavina del Rio T."/>
            <person name="Tice H."/>
            <person name="Bruce D."/>
            <person name="Goodwin L."/>
            <person name="Pitluck S."/>
            <person name="Chertkov O."/>
            <person name="Brettin T."/>
            <person name="Detter J.C."/>
            <person name="Han C."/>
            <person name="Larimer F."/>
            <person name="Land M."/>
            <person name="Hauser L."/>
            <person name="Kyrpides N."/>
            <person name="Mikhailova N."/>
            <person name="Spring S."/>
            <person name="Beller H."/>
        </authorList>
    </citation>
    <scope>NUCLEOTIDE SEQUENCE [LARGE SCALE GENOMIC DNA]</scope>
    <source>
        <strain>DSM 9187 / NBRC 110442 / TA 4</strain>
    </source>
</reference>
<proteinExistence type="inferred from homology"/>
<dbReference type="EMBL" id="CP001616">
    <property type="protein sequence ID" value="ACQ92710.1"/>
    <property type="molecule type" value="Genomic_DNA"/>
</dbReference>
<dbReference type="RefSeq" id="WP_012729309.1">
    <property type="nucleotide sequence ID" value="NC_012691.1"/>
</dbReference>
<dbReference type="SMR" id="C4LDB4"/>
<dbReference type="STRING" id="595494.Tola_1084"/>
<dbReference type="KEGG" id="tau:Tola_1084"/>
<dbReference type="eggNOG" id="COG1219">
    <property type="taxonomic scope" value="Bacteria"/>
</dbReference>
<dbReference type="HOGENOM" id="CLU_014218_8_2_6"/>
<dbReference type="OrthoDB" id="9804062at2"/>
<dbReference type="Proteomes" id="UP000009073">
    <property type="component" value="Chromosome"/>
</dbReference>
<dbReference type="GO" id="GO:0009376">
    <property type="term" value="C:HslUV protease complex"/>
    <property type="evidence" value="ECO:0007669"/>
    <property type="project" value="TreeGrafter"/>
</dbReference>
<dbReference type="GO" id="GO:0005524">
    <property type="term" value="F:ATP binding"/>
    <property type="evidence" value="ECO:0007669"/>
    <property type="project" value="UniProtKB-UniRule"/>
</dbReference>
<dbReference type="GO" id="GO:0016887">
    <property type="term" value="F:ATP hydrolysis activity"/>
    <property type="evidence" value="ECO:0007669"/>
    <property type="project" value="InterPro"/>
</dbReference>
<dbReference type="GO" id="GO:0140662">
    <property type="term" value="F:ATP-dependent protein folding chaperone"/>
    <property type="evidence" value="ECO:0007669"/>
    <property type="project" value="InterPro"/>
</dbReference>
<dbReference type="GO" id="GO:0046983">
    <property type="term" value="F:protein dimerization activity"/>
    <property type="evidence" value="ECO:0007669"/>
    <property type="project" value="InterPro"/>
</dbReference>
<dbReference type="GO" id="GO:0051082">
    <property type="term" value="F:unfolded protein binding"/>
    <property type="evidence" value="ECO:0007669"/>
    <property type="project" value="UniProtKB-UniRule"/>
</dbReference>
<dbReference type="GO" id="GO:0008270">
    <property type="term" value="F:zinc ion binding"/>
    <property type="evidence" value="ECO:0007669"/>
    <property type="project" value="InterPro"/>
</dbReference>
<dbReference type="GO" id="GO:0051301">
    <property type="term" value="P:cell division"/>
    <property type="evidence" value="ECO:0007669"/>
    <property type="project" value="TreeGrafter"/>
</dbReference>
<dbReference type="GO" id="GO:0051603">
    <property type="term" value="P:proteolysis involved in protein catabolic process"/>
    <property type="evidence" value="ECO:0007669"/>
    <property type="project" value="TreeGrafter"/>
</dbReference>
<dbReference type="CDD" id="cd19497">
    <property type="entry name" value="RecA-like_ClpX"/>
    <property type="match status" value="1"/>
</dbReference>
<dbReference type="FunFam" id="1.10.8.60:FF:000002">
    <property type="entry name" value="ATP-dependent Clp protease ATP-binding subunit ClpX"/>
    <property type="match status" value="1"/>
</dbReference>
<dbReference type="FunFam" id="3.40.50.300:FF:000005">
    <property type="entry name" value="ATP-dependent Clp protease ATP-binding subunit ClpX"/>
    <property type="match status" value="1"/>
</dbReference>
<dbReference type="Gene3D" id="1.10.8.60">
    <property type="match status" value="1"/>
</dbReference>
<dbReference type="Gene3D" id="6.20.220.10">
    <property type="entry name" value="ClpX chaperone, C4-type zinc finger domain"/>
    <property type="match status" value="1"/>
</dbReference>
<dbReference type="Gene3D" id="3.40.50.300">
    <property type="entry name" value="P-loop containing nucleotide triphosphate hydrolases"/>
    <property type="match status" value="1"/>
</dbReference>
<dbReference type="HAMAP" id="MF_00175">
    <property type="entry name" value="ClpX"/>
    <property type="match status" value="1"/>
</dbReference>
<dbReference type="InterPro" id="IPR003593">
    <property type="entry name" value="AAA+_ATPase"/>
</dbReference>
<dbReference type="InterPro" id="IPR050052">
    <property type="entry name" value="ATP-dep_Clp_protease_ClpX"/>
</dbReference>
<dbReference type="InterPro" id="IPR003959">
    <property type="entry name" value="ATPase_AAA_core"/>
</dbReference>
<dbReference type="InterPro" id="IPR019489">
    <property type="entry name" value="Clp_ATPase_C"/>
</dbReference>
<dbReference type="InterPro" id="IPR004487">
    <property type="entry name" value="Clp_protease_ATP-bd_su_ClpX"/>
</dbReference>
<dbReference type="InterPro" id="IPR046425">
    <property type="entry name" value="ClpX_bact"/>
</dbReference>
<dbReference type="InterPro" id="IPR027417">
    <property type="entry name" value="P-loop_NTPase"/>
</dbReference>
<dbReference type="InterPro" id="IPR010603">
    <property type="entry name" value="Znf_CppX_C4"/>
</dbReference>
<dbReference type="InterPro" id="IPR038366">
    <property type="entry name" value="Znf_CppX_C4_sf"/>
</dbReference>
<dbReference type="NCBIfam" id="TIGR00382">
    <property type="entry name" value="clpX"/>
    <property type="match status" value="1"/>
</dbReference>
<dbReference type="NCBIfam" id="NF003745">
    <property type="entry name" value="PRK05342.1"/>
    <property type="match status" value="1"/>
</dbReference>
<dbReference type="PANTHER" id="PTHR48102:SF7">
    <property type="entry name" value="ATP-DEPENDENT CLP PROTEASE ATP-BINDING SUBUNIT CLPX-LIKE, MITOCHONDRIAL"/>
    <property type="match status" value="1"/>
</dbReference>
<dbReference type="PANTHER" id="PTHR48102">
    <property type="entry name" value="ATP-DEPENDENT CLP PROTEASE ATP-BINDING SUBUNIT CLPX-LIKE, MITOCHONDRIAL-RELATED"/>
    <property type="match status" value="1"/>
</dbReference>
<dbReference type="Pfam" id="PF07724">
    <property type="entry name" value="AAA_2"/>
    <property type="match status" value="1"/>
</dbReference>
<dbReference type="Pfam" id="PF10431">
    <property type="entry name" value="ClpB_D2-small"/>
    <property type="match status" value="1"/>
</dbReference>
<dbReference type="Pfam" id="PF06689">
    <property type="entry name" value="zf-C4_ClpX"/>
    <property type="match status" value="1"/>
</dbReference>
<dbReference type="SMART" id="SM00382">
    <property type="entry name" value="AAA"/>
    <property type="match status" value="1"/>
</dbReference>
<dbReference type="SMART" id="SM01086">
    <property type="entry name" value="ClpB_D2-small"/>
    <property type="match status" value="1"/>
</dbReference>
<dbReference type="SMART" id="SM00994">
    <property type="entry name" value="zf-C4_ClpX"/>
    <property type="match status" value="1"/>
</dbReference>
<dbReference type="SUPFAM" id="SSF57716">
    <property type="entry name" value="Glucocorticoid receptor-like (DNA-binding domain)"/>
    <property type="match status" value="1"/>
</dbReference>
<dbReference type="SUPFAM" id="SSF52540">
    <property type="entry name" value="P-loop containing nucleoside triphosphate hydrolases"/>
    <property type="match status" value="1"/>
</dbReference>
<dbReference type="PROSITE" id="PS51902">
    <property type="entry name" value="CLPX_ZB"/>
    <property type="match status" value="1"/>
</dbReference>
<gene>
    <name evidence="1" type="primary">clpX</name>
    <name type="ordered locus">Tola_1084</name>
</gene>
<sequence length="426" mass="46782">MTDKRKDGDHSKLLYCSFCGKSQHEVRKLIAGPSVYICDECVDLCNDIIREEIRDIGGARPHMTELPTPHKIRAHLDDYVIGQDLAKKVLAVAVYNHYKRLRSGSSADGVELGKSNILLIGPTGSGKTLLAETLARLLDVPFTMADATTLTEAGYVGEDVENIIQKLLQKCDYDVEKAQRGIVYIDEIDKISRKSDNPSITRDVSGEGVQQALLKLIEGTIAAVPPQGGRKHPQQEFLQVDTSKILFICGGAFAGLDKVVEQRTAQGAGIGFNAEVKSKDKKVTLSESFAKVEPEDLVKYGLIPEFIGRLPVVATLTELDENALIQILVEPKNALTKQYQALFKLEGAELEFREDALRAIAHKAMERKTGARGLRSIVEGVLLDTMYDLPSVENVSKVVVDEHVINGETQPIMIYDNPEKQAASAD</sequence>